<feature type="chain" id="PRO_0000344841" description="Ribonuclease Y">
    <location>
        <begin position="1"/>
        <end position="524"/>
    </location>
</feature>
<feature type="transmembrane region" description="Helical" evidence="1">
    <location>
        <begin position="3"/>
        <end position="23"/>
    </location>
</feature>
<feature type="domain" description="KH" evidence="1">
    <location>
        <begin position="214"/>
        <end position="280"/>
    </location>
</feature>
<feature type="domain" description="HD" evidence="2">
    <location>
        <begin position="340"/>
        <end position="432"/>
    </location>
</feature>
<protein>
    <recommendedName>
        <fullName evidence="1">Ribonuclease Y</fullName>
        <shortName evidence="1">RNase Y</shortName>
        <ecNumber evidence="1">3.1.-.-</ecNumber>
    </recommendedName>
</protein>
<name>RNY_CHLCH</name>
<dbReference type="EC" id="3.1.-.-" evidence="1"/>
<dbReference type="EMBL" id="CP000108">
    <property type="protein sequence ID" value="ABB28796.1"/>
    <property type="molecule type" value="Genomic_DNA"/>
</dbReference>
<dbReference type="SMR" id="Q3AQC9"/>
<dbReference type="STRING" id="340177.Cag_1541"/>
<dbReference type="KEGG" id="cch:Cag_1541"/>
<dbReference type="eggNOG" id="COG1418">
    <property type="taxonomic scope" value="Bacteria"/>
</dbReference>
<dbReference type="HOGENOM" id="CLU_028328_1_0_10"/>
<dbReference type="OrthoDB" id="9803205at2"/>
<dbReference type="GO" id="GO:0005886">
    <property type="term" value="C:plasma membrane"/>
    <property type="evidence" value="ECO:0007669"/>
    <property type="project" value="UniProtKB-SubCell"/>
</dbReference>
<dbReference type="GO" id="GO:0003723">
    <property type="term" value="F:RNA binding"/>
    <property type="evidence" value="ECO:0007669"/>
    <property type="project" value="UniProtKB-UniRule"/>
</dbReference>
<dbReference type="GO" id="GO:0004521">
    <property type="term" value="F:RNA endonuclease activity"/>
    <property type="evidence" value="ECO:0007669"/>
    <property type="project" value="UniProtKB-UniRule"/>
</dbReference>
<dbReference type="GO" id="GO:0006402">
    <property type="term" value="P:mRNA catabolic process"/>
    <property type="evidence" value="ECO:0007669"/>
    <property type="project" value="UniProtKB-UniRule"/>
</dbReference>
<dbReference type="CDD" id="cd00077">
    <property type="entry name" value="HDc"/>
    <property type="match status" value="1"/>
</dbReference>
<dbReference type="CDD" id="cd22431">
    <property type="entry name" value="KH-I_RNaseY"/>
    <property type="match status" value="1"/>
</dbReference>
<dbReference type="Gene3D" id="1.10.3210.10">
    <property type="entry name" value="Hypothetical protein af1432"/>
    <property type="match status" value="1"/>
</dbReference>
<dbReference type="Gene3D" id="3.30.1370.10">
    <property type="entry name" value="K Homology domain, type 1"/>
    <property type="match status" value="1"/>
</dbReference>
<dbReference type="HAMAP" id="MF_00335">
    <property type="entry name" value="RNase_Y"/>
    <property type="match status" value="1"/>
</dbReference>
<dbReference type="InterPro" id="IPR003607">
    <property type="entry name" value="HD/PDEase_dom"/>
</dbReference>
<dbReference type="InterPro" id="IPR006674">
    <property type="entry name" value="HD_domain"/>
</dbReference>
<dbReference type="InterPro" id="IPR006675">
    <property type="entry name" value="HDIG_dom"/>
</dbReference>
<dbReference type="InterPro" id="IPR004087">
    <property type="entry name" value="KH_dom"/>
</dbReference>
<dbReference type="InterPro" id="IPR004088">
    <property type="entry name" value="KH_dom_type_1"/>
</dbReference>
<dbReference type="InterPro" id="IPR036612">
    <property type="entry name" value="KH_dom_type_1_sf"/>
</dbReference>
<dbReference type="InterPro" id="IPR017705">
    <property type="entry name" value="Ribonuclease_Y"/>
</dbReference>
<dbReference type="InterPro" id="IPR022711">
    <property type="entry name" value="RNase_Y_N"/>
</dbReference>
<dbReference type="NCBIfam" id="TIGR00277">
    <property type="entry name" value="HDIG"/>
    <property type="match status" value="1"/>
</dbReference>
<dbReference type="NCBIfam" id="TIGR03319">
    <property type="entry name" value="RNase_Y"/>
    <property type="match status" value="1"/>
</dbReference>
<dbReference type="PANTHER" id="PTHR12826">
    <property type="entry name" value="RIBONUCLEASE Y"/>
    <property type="match status" value="1"/>
</dbReference>
<dbReference type="PANTHER" id="PTHR12826:SF15">
    <property type="entry name" value="RIBONUCLEASE Y"/>
    <property type="match status" value="1"/>
</dbReference>
<dbReference type="Pfam" id="PF01966">
    <property type="entry name" value="HD"/>
    <property type="match status" value="1"/>
</dbReference>
<dbReference type="Pfam" id="PF00013">
    <property type="entry name" value="KH_1"/>
    <property type="match status" value="1"/>
</dbReference>
<dbReference type="Pfam" id="PF12072">
    <property type="entry name" value="RNase_Y_N"/>
    <property type="match status" value="1"/>
</dbReference>
<dbReference type="SMART" id="SM00471">
    <property type="entry name" value="HDc"/>
    <property type="match status" value="1"/>
</dbReference>
<dbReference type="SMART" id="SM00322">
    <property type="entry name" value="KH"/>
    <property type="match status" value="1"/>
</dbReference>
<dbReference type="SUPFAM" id="SSF54791">
    <property type="entry name" value="Eukaryotic type KH-domain (KH-domain type I)"/>
    <property type="match status" value="1"/>
</dbReference>
<dbReference type="SUPFAM" id="SSF109604">
    <property type="entry name" value="HD-domain/PDEase-like"/>
    <property type="match status" value="1"/>
</dbReference>
<dbReference type="PROSITE" id="PS51831">
    <property type="entry name" value="HD"/>
    <property type="match status" value="1"/>
</dbReference>
<dbReference type="PROSITE" id="PS50084">
    <property type="entry name" value="KH_TYPE_1"/>
    <property type="match status" value="1"/>
</dbReference>
<keyword id="KW-1003">Cell membrane</keyword>
<keyword id="KW-0255">Endonuclease</keyword>
<keyword id="KW-0378">Hydrolase</keyword>
<keyword id="KW-0472">Membrane</keyword>
<keyword id="KW-0540">Nuclease</keyword>
<keyword id="KW-0694">RNA-binding</keyword>
<keyword id="KW-0812">Transmembrane</keyword>
<keyword id="KW-1133">Transmembrane helix</keyword>
<sequence length="524" mass="58606">MGIVINLLLLVLAALVAFVAGFFIGRYFLERIGTTKVLEAEERAVQIVQEAQKEANEYKELKVSEVNQEWKKKRREFEQDVLIKNNKFAQLQKQLQQREAQLKKQSQDVRDAERKLQDQRKEVEQLSDSVKLRATELERVIVEQNQRLESISNLQADEARQMLIDNMVTQAREEASNTIHRIHEEAEQQATRMAEKTLITAIQRISFEQTTENALSVVHIQSDELKGRIIGREGRNIKAFENATGVDIIVDDTPEVVILSCFDPLRRELAKLTLKKLLADGIIHPVAIEKAYADATKEIDDVVYSAGEEVAASLQLNDIPTEVIALLGKMKFHTVYGQNLLQHSREVAMLAGVMAAELKLDARMAKRAGLLHDIGLVLPESDEPHAITGMNFMKKFNESDQLLNAIGAHHGDMEKESPLADLVDAANTISLSRPGARGAVTADGNVKRLESLEEIAKGFPGVLKTYALQAGREIRVIVEGDNVSDSQADMLAHDIARKIESEAQYPGQIKVSIIREKRSVAYAK</sequence>
<reference key="1">
    <citation type="submission" date="2005-08" db="EMBL/GenBank/DDBJ databases">
        <title>Complete sequence of Chlorobium chlorochromatii CaD3.</title>
        <authorList>
            <consortium name="US DOE Joint Genome Institute"/>
            <person name="Copeland A."/>
            <person name="Lucas S."/>
            <person name="Lapidus A."/>
            <person name="Barry K."/>
            <person name="Detter J.C."/>
            <person name="Glavina T."/>
            <person name="Hammon N."/>
            <person name="Israni S."/>
            <person name="Pitluck S."/>
            <person name="Bryant D."/>
            <person name="Schmutz J."/>
            <person name="Larimer F."/>
            <person name="Land M."/>
            <person name="Kyrpides N."/>
            <person name="Ivanova N."/>
            <person name="Richardson P."/>
        </authorList>
    </citation>
    <scope>NUCLEOTIDE SEQUENCE [LARGE SCALE GENOMIC DNA]</scope>
    <source>
        <strain>CaD3</strain>
    </source>
</reference>
<gene>
    <name evidence="1" type="primary">rny</name>
    <name type="ordered locus">Cag_1541</name>
</gene>
<evidence type="ECO:0000255" key="1">
    <source>
        <dbReference type="HAMAP-Rule" id="MF_00335"/>
    </source>
</evidence>
<evidence type="ECO:0000255" key="2">
    <source>
        <dbReference type="PROSITE-ProRule" id="PRU01175"/>
    </source>
</evidence>
<proteinExistence type="inferred from homology"/>
<accession>Q3AQC9</accession>
<organism>
    <name type="scientific">Chlorobium chlorochromatii (strain CaD3)</name>
    <dbReference type="NCBI Taxonomy" id="340177"/>
    <lineage>
        <taxon>Bacteria</taxon>
        <taxon>Pseudomonadati</taxon>
        <taxon>Chlorobiota</taxon>
        <taxon>Chlorobiia</taxon>
        <taxon>Chlorobiales</taxon>
        <taxon>Chlorobiaceae</taxon>
        <taxon>Chlorobium/Pelodictyon group</taxon>
        <taxon>Chlorobium</taxon>
    </lineage>
</organism>
<comment type="function">
    <text evidence="1">Endoribonuclease that initiates mRNA decay.</text>
</comment>
<comment type="subcellular location">
    <subcellularLocation>
        <location evidence="1">Cell membrane</location>
        <topology evidence="1">Single-pass membrane protein</topology>
    </subcellularLocation>
</comment>
<comment type="similarity">
    <text evidence="1">Belongs to the RNase Y family.</text>
</comment>